<name>CYSZ_ECOUT</name>
<feature type="chain" id="PRO_1000013712" description="Sulfate transporter CysZ">
    <location>
        <begin position="1"/>
        <end position="253"/>
    </location>
</feature>
<feature type="transmembrane region" description="Helical" evidence="1">
    <location>
        <begin position="31"/>
        <end position="51"/>
    </location>
</feature>
<feature type="transmembrane region" description="Helical" evidence="1">
    <location>
        <begin position="75"/>
        <end position="95"/>
    </location>
</feature>
<feature type="transmembrane region" description="Helical" evidence="1">
    <location>
        <begin position="151"/>
        <end position="171"/>
    </location>
</feature>
<feature type="transmembrane region" description="Helical" evidence="1">
    <location>
        <begin position="222"/>
        <end position="242"/>
    </location>
</feature>
<evidence type="ECO:0000255" key="1">
    <source>
        <dbReference type="HAMAP-Rule" id="MF_00468"/>
    </source>
</evidence>
<accession>Q1R8V8</accession>
<comment type="function">
    <text evidence="1">High affinity, high specificity proton-dependent sulfate transporter, which mediates sulfate uptake. Provides the sulfur source for the cysteine synthesis pathway.</text>
</comment>
<comment type="subcellular location">
    <subcellularLocation>
        <location evidence="1">Cell inner membrane</location>
        <topology evidence="1">Multi-pass membrane protein</topology>
    </subcellularLocation>
</comment>
<comment type="similarity">
    <text evidence="1">Belongs to the CysZ family.</text>
</comment>
<protein>
    <recommendedName>
        <fullName evidence="1">Sulfate transporter CysZ</fullName>
    </recommendedName>
</protein>
<sequence length="253" mass="29305">MVSSFTSAPRSGFYYFAQGWKLVSQPGIRRFVILPLLVNILLMGGAFWWLFTQLDVWIPTLMSYVPDWLQWLSYLLWPLAVISVLLVFGYFFSTIANWIAAPFNGLLAEQLEARLTGATPPDTGIFGIMKDVPRIMKREWQKFAWYLPRAIVLLILYFIPGIGQTVAPVLWFLFSAWMLAIQYCDYPFDNHKVPFKEMRTALRTRKITNMQFGALTSLFTMIPLLNLFIMPVAVCGATAMWVDCYRDKHAMWR</sequence>
<organism>
    <name type="scientific">Escherichia coli (strain UTI89 / UPEC)</name>
    <dbReference type="NCBI Taxonomy" id="364106"/>
    <lineage>
        <taxon>Bacteria</taxon>
        <taxon>Pseudomonadati</taxon>
        <taxon>Pseudomonadota</taxon>
        <taxon>Gammaproteobacteria</taxon>
        <taxon>Enterobacterales</taxon>
        <taxon>Enterobacteriaceae</taxon>
        <taxon>Escherichia</taxon>
    </lineage>
</organism>
<dbReference type="EMBL" id="CP000243">
    <property type="protein sequence ID" value="ABE08206.1"/>
    <property type="molecule type" value="Genomic_DNA"/>
</dbReference>
<dbReference type="RefSeq" id="WP_000254839.1">
    <property type="nucleotide sequence ID" value="NZ_CP064825.1"/>
</dbReference>
<dbReference type="SMR" id="Q1R8V8"/>
<dbReference type="GeneID" id="93774718"/>
<dbReference type="KEGG" id="eci:UTI89_C2746"/>
<dbReference type="HOGENOM" id="CLU_070331_1_0_6"/>
<dbReference type="Proteomes" id="UP000001952">
    <property type="component" value="Chromosome"/>
</dbReference>
<dbReference type="GO" id="GO:0005886">
    <property type="term" value="C:plasma membrane"/>
    <property type="evidence" value="ECO:0007669"/>
    <property type="project" value="UniProtKB-SubCell"/>
</dbReference>
<dbReference type="GO" id="GO:0009675">
    <property type="term" value="F:high-affinity sulfate:proton symporter activity"/>
    <property type="evidence" value="ECO:0007669"/>
    <property type="project" value="TreeGrafter"/>
</dbReference>
<dbReference type="GO" id="GO:0019344">
    <property type="term" value="P:cysteine biosynthetic process"/>
    <property type="evidence" value="ECO:0007669"/>
    <property type="project" value="UniProtKB-UniRule"/>
</dbReference>
<dbReference type="GO" id="GO:0000103">
    <property type="term" value="P:sulfate assimilation"/>
    <property type="evidence" value="ECO:0007669"/>
    <property type="project" value="InterPro"/>
</dbReference>
<dbReference type="HAMAP" id="MF_00468">
    <property type="entry name" value="CysZ"/>
    <property type="match status" value="1"/>
</dbReference>
<dbReference type="InterPro" id="IPR050480">
    <property type="entry name" value="CysZ_sulfate_transptr"/>
</dbReference>
<dbReference type="InterPro" id="IPR022985">
    <property type="entry name" value="Sulfate_CysZ"/>
</dbReference>
<dbReference type="NCBIfam" id="NF003433">
    <property type="entry name" value="PRK04949.1"/>
    <property type="match status" value="1"/>
</dbReference>
<dbReference type="PANTHER" id="PTHR37468">
    <property type="entry name" value="SULFATE TRANSPORTER CYSZ"/>
    <property type="match status" value="1"/>
</dbReference>
<dbReference type="PANTHER" id="PTHR37468:SF1">
    <property type="entry name" value="SULFATE TRANSPORTER CYSZ"/>
    <property type="match status" value="1"/>
</dbReference>
<dbReference type="Pfam" id="PF07264">
    <property type="entry name" value="EI24"/>
    <property type="match status" value="1"/>
</dbReference>
<keyword id="KW-0028">Amino-acid biosynthesis</keyword>
<keyword id="KW-0997">Cell inner membrane</keyword>
<keyword id="KW-1003">Cell membrane</keyword>
<keyword id="KW-0198">Cysteine biosynthesis</keyword>
<keyword id="KW-0472">Membrane</keyword>
<keyword id="KW-0764">Sulfate transport</keyword>
<keyword id="KW-0812">Transmembrane</keyword>
<keyword id="KW-1133">Transmembrane helix</keyword>
<keyword id="KW-0813">Transport</keyword>
<gene>
    <name evidence="1" type="primary">cysZ</name>
    <name type="ordered locus">UTI89_C2746</name>
</gene>
<proteinExistence type="inferred from homology"/>
<reference key="1">
    <citation type="journal article" date="2006" name="Proc. Natl. Acad. Sci. U.S.A.">
        <title>Identification of genes subject to positive selection in uropathogenic strains of Escherichia coli: a comparative genomics approach.</title>
        <authorList>
            <person name="Chen S.L."/>
            <person name="Hung C.-S."/>
            <person name="Xu J."/>
            <person name="Reigstad C.S."/>
            <person name="Magrini V."/>
            <person name="Sabo A."/>
            <person name="Blasiar D."/>
            <person name="Bieri T."/>
            <person name="Meyer R.R."/>
            <person name="Ozersky P."/>
            <person name="Armstrong J.R."/>
            <person name="Fulton R.S."/>
            <person name="Latreille J.P."/>
            <person name="Spieth J."/>
            <person name="Hooton T.M."/>
            <person name="Mardis E.R."/>
            <person name="Hultgren S.J."/>
            <person name="Gordon J.I."/>
        </authorList>
    </citation>
    <scope>NUCLEOTIDE SEQUENCE [LARGE SCALE GENOMIC DNA]</scope>
    <source>
        <strain>UTI89 / UPEC</strain>
    </source>
</reference>